<accession>Q289L9</accession>
<protein>
    <recommendedName>
        <fullName evidence="2">RNA-directed RNA polymerase catalytic subunit</fullName>
        <ecNumber evidence="2">2.7.7.48</ecNumber>
    </recommendedName>
    <alternativeName>
        <fullName evidence="2">Polymerase basic protein 1</fullName>
        <shortName evidence="2">PB1</shortName>
    </alternativeName>
    <alternativeName>
        <fullName evidence="2">RNA-directed RNA polymerase subunit P1</fullName>
    </alternativeName>
</protein>
<proteinExistence type="inferred from homology"/>
<gene>
    <name evidence="2" type="primary">PB1</name>
</gene>
<comment type="function">
    <text evidence="2">RNA-dependent RNA polymerase which is responsible for replication and transcription of virus RNA segments. The transcription of viral mRNAs occurs by a unique mechanism called cap-snatching. 5' methylated caps of cellular mRNAs are cleaved after 10-13 nucleotides by PA. In turn, these short capped RNAs are used as primers by PB1 for transcription of viral mRNAs. During virus replication, PB1 initiates RNA synthesis and copy vRNA into complementary RNA (cRNA) which in turn serves as a template for the production of more vRNAs.</text>
</comment>
<comment type="catalytic activity">
    <reaction evidence="2">
        <text>RNA(n) + a ribonucleoside 5'-triphosphate = RNA(n+1) + diphosphate</text>
        <dbReference type="Rhea" id="RHEA:21248"/>
        <dbReference type="Rhea" id="RHEA-COMP:14527"/>
        <dbReference type="Rhea" id="RHEA-COMP:17342"/>
        <dbReference type="ChEBI" id="CHEBI:33019"/>
        <dbReference type="ChEBI" id="CHEBI:61557"/>
        <dbReference type="ChEBI" id="CHEBI:140395"/>
        <dbReference type="EC" id="2.7.7.48"/>
    </reaction>
</comment>
<comment type="subunit">
    <text evidence="1 2">Influenza RNA polymerase is composed of three subunits: PB1, PB2 and PA. Interacts (via N-terminus) with PA (via C-terminus). Interacts (via C-terminus) with PB2 (via N-terminus); this interaction is essential for transcription initiation. Interacts (via C-terminus) with human PKP2 (via N-terminus); the interaction competitively inhibits the interaction between the RNA polymerase subunits PB1 and PB2 (By similarity).</text>
</comment>
<comment type="subcellular location">
    <subcellularLocation>
        <location evidence="2">Host nucleus</location>
    </subcellularLocation>
    <subcellularLocation>
        <location evidence="2">Host cytoplasm</location>
    </subcellularLocation>
</comment>
<comment type="PTM">
    <text evidence="2">Phosphorylated by host PRKCA.</text>
</comment>
<comment type="similarity">
    <text evidence="2">Belongs to the influenza viruses polymerase PB1 family.</text>
</comment>
<organism>
    <name type="scientific">Influenza A virus (strain A/New Zealand:South Canterbury/35/2000 H1N1)</name>
    <dbReference type="NCBI Taxonomy" id="363066"/>
    <lineage>
        <taxon>Viruses</taxon>
        <taxon>Riboviria</taxon>
        <taxon>Orthornavirae</taxon>
        <taxon>Negarnaviricota</taxon>
        <taxon>Polyploviricotina</taxon>
        <taxon>Insthoviricetes</taxon>
        <taxon>Articulavirales</taxon>
        <taxon>Orthomyxoviridae</taxon>
        <taxon>Alphainfluenzavirus</taxon>
        <taxon>Alphainfluenzavirus influenzae</taxon>
        <taxon>Influenza A virus</taxon>
    </lineage>
</organism>
<reference key="1">
    <citation type="submission" date="2006-03" db="EMBL/GenBank/DDBJ databases">
        <title>The NIAID influenza genome sequencing project.</title>
        <authorList>
            <person name="Ghedin E."/>
            <person name="Spiro D."/>
            <person name="Sengamalay N."/>
            <person name="Zaborsky J."/>
            <person name="Feldblyum T."/>
            <person name="Subbu V."/>
            <person name="Sparenborg J."/>
            <person name="Groveman L."/>
            <person name="Halpin R."/>
            <person name="Shumway M."/>
            <person name="Sitz J."/>
            <person name="Katzel D."/>
            <person name="Koo H."/>
            <person name="Salzberg S.L."/>
            <person name="Jennings L."/>
            <person name="Smit M."/>
            <person name="Wells V."/>
            <person name="Bao Y."/>
            <person name="Bolotov P."/>
            <person name="Dernovoy D."/>
            <person name="Kiryutin B."/>
            <person name="Lipman D.J."/>
            <person name="Tatusova T."/>
        </authorList>
    </citation>
    <scope>NUCLEOTIDE SEQUENCE [GENOMIC RNA]</scope>
</reference>
<reference key="2">
    <citation type="submission" date="2006-03" db="EMBL/GenBank/DDBJ databases">
        <authorList>
            <consortium name="The NIAID Influenza Genome Sequencing Consortium"/>
        </authorList>
    </citation>
    <scope>NUCLEOTIDE SEQUENCE [GENOMIC RNA]</scope>
</reference>
<keyword id="KW-1262">Eukaryotic host gene expression shutoff by virus</keyword>
<keyword id="KW-1191">Eukaryotic host transcription shutoff by virus</keyword>
<keyword id="KW-1035">Host cytoplasm</keyword>
<keyword id="KW-1190">Host gene expression shutoff by virus</keyword>
<keyword id="KW-1048">Host nucleus</keyword>
<keyword id="KW-0945">Host-virus interaction</keyword>
<keyword id="KW-1104">Inhibition of host RNA polymerase II by virus</keyword>
<keyword id="KW-0547">Nucleotide-binding</keyword>
<keyword id="KW-0548">Nucleotidyltransferase</keyword>
<keyword id="KW-0597">Phosphoprotein</keyword>
<keyword id="KW-0696">RNA-directed RNA polymerase</keyword>
<keyword id="KW-0808">Transferase</keyword>
<keyword id="KW-0693">Viral RNA replication</keyword>
<keyword id="KW-1195">Viral transcription</keyword>
<name>RDRP_I00A1</name>
<organismHost>
    <name type="scientific">Aves</name>
    <dbReference type="NCBI Taxonomy" id="8782"/>
</organismHost>
<organismHost>
    <name type="scientific">Homo sapiens</name>
    <name type="common">Human</name>
    <dbReference type="NCBI Taxonomy" id="9606"/>
</organismHost>
<organismHost>
    <name type="scientific">Sus scrofa</name>
    <name type="common">Pig</name>
    <dbReference type="NCBI Taxonomy" id="9823"/>
</organismHost>
<sequence>MDVNPTLLFLKVPAQNAISTTFPYTGDPPYSHGTGTGYTMDTVNRTHQYSERGRWTKNTETGAPQLNPIDGPLPKDNEPSGYAQTDCVLEAMAFLEESHPGIFENSCIETMEVVQQTRVDKLTQGRQTYDWTLNRNQPAATALANTIEVFRSNGLIANESGRLIDFLKDVMESMDRDEIEVTTHFQRKRRVRDNVTKKMVTQRTIGKKKHKLDKRSYLIRALTLNTMTKDAERGKLKRRAIATPGMQIRGFVYFVETLARSICEKLEQSGLPVGGNEKKAKLANVVRKMMTNSQDTEISFTITGDNTKWNENQNPRMFLAMITYITKNQPEWFRNILSIAPIMFSNKMARLGKGYMFESKSMKLRTQIPAEMLANIDLKYFNDSTKKKIEKIRPLLIDGTASLSPGMMMGMFNMLSTVLGVSILNLGQKRYTKTTYWWDGLQSSDDFALIVNAPNYAGIQAGVDRFYRTCKLLGINMSKKKSYINKTGTFEFTSFFYRYGFVANFSMELPSFGVSGVNESADMSIGVTVIKNNMINNDLGPATAQMALQLFIKDYRYTYRCHRGDTQIQTRRSFEIKKLWDQTRSKAGLLVSDGGPNLYNIRNLHIPEVCLKWELMDEDYQGRLCNPLNPFVSHKEIESVNNAVMMPAHGPAKNMEYDAVATTHSWVPKRNRSILNTSQRGILEDEQMYQRCCNLFEKFFPSSSYRRPVGISSMVEAMVSRARIDARIDFESGRTKKEEFAEIMKTCSTIEDLRRQK</sequence>
<evidence type="ECO:0000250" key="1">
    <source>
        <dbReference type="UniProtKB" id="P03431"/>
    </source>
</evidence>
<evidence type="ECO:0000255" key="2">
    <source>
        <dbReference type="HAMAP-Rule" id="MF_04065"/>
    </source>
</evidence>
<evidence type="ECO:0000256" key="3">
    <source>
        <dbReference type="SAM" id="MobiDB-lite"/>
    </source>
</evidence>
<dbReference type="EC" id="2.7.7.48" evidence="2"/>
<dbReference type="EMBL" id="CY009210">
    <property type="protein sequence ID" value="ABD61526.1"/>
    <property type="molecule type" value="Genomic_RNA"/>
</dbReference>
<dbReference type="SMR" id="Q289L9"/>
<dbReference type="Proteomes" id="UP001366552">
    <property type="component" value="Genome"/>
</dbReference>
<dbReference type="GO" id="GO:0030430">
    <property type="term" value="C:host cell cytoplasm"/>
    <property type="evidence" value="ECO:0007669"/>
    <property type="project" value="UniProtKB-SubCell"/>
</dbReference>
<dbReference type="GO" id="GO:0042025">
    <property type="term" value="C:host cell nucleus"/>
    <property type="evidence" value="ECO:0007669"/>
    <property type="project" value="UniProtKB-SubCell"/>
</dbReference>
<dbReference type="GO" id="GO:0000166">
    <property type="term" value="F:nucleotide binding"/>
    <property type="evidence" value="ECO:0007669"/>
    <property type="project" value="UniProtKB-UniRule"/>
</dbReference>
<dbReference type="GO" id="GO:0003723">
    <property type="term" value="F:RNA binding"/>
    <property type="evidence" value="ECO:0007669"/>
    <property type="project" value="InterPro"/>
</dbReference>
<dbReference type="GO" id="GO:0003968">
    <property type="term" value="F:RNA-directed RNA polymerase activity"/>
    <property type="evidence" value="ECO:0007669"/>
    <property type="project" value="UniProtKB-UniRule"/>
</dbReference>
<dbReference type="GO" id="GO:0006351">
    <property type="term" value="P:DNA-templated transcription"/>
    <property type="evidence" value="ECO:0007669"/>
    <property type="project" value="UniProtKB-UniRule"/>
</dbReference>
<dbReference type="GO" id="GO:0039657">
    <property type="term" value="P:symbiont-mediated suppression of host gene expression"/>
    <property type="evidence" value="ECO:0007669"/>
    <property type="project" value="UniProtKB-KW"/>
</dbReference>
<dbReference type="GO" id="GO:0039523">
    <property type="term" value="P:symbiont-mediated suppression of host mRNA transcription via inhibition of RNA polymerase II activity"/>
    <property type="evidence" value="ECO:0007669"/>
    <property type="project" value="UniProtKB-UniRule"/>
</dbReference>
<dbReference type="GO" id="GO:0039694">
    <property type="term" value="P:viral RNA genome replication"/>
    <property type="evidence" value="ECO:0007669"/>
    <property type="project" value="UniProtKB-UniRule"/>
</dbReference>
<dbReference type="GO" id="GO:0019083">
    <property type="term" value="P:viral transcription"/>
    <property type="evidence" value="ECO:0007669"/>
    <property type="project" value="UniProtKB-KW"/>
</dbReference>
<dbReference type="Gene3D" id="6.10.140.720">
    <property type="match status" value="1"/>
</dbReference>
<dbReference type="HAMAP" id="MF_04065">
    <property type="entry name" value="INFV_RDRP"/>
    <property type="match status" value="1"/>
</dbReference>
<dbReference type="InterPro" id="IPR007099">
    <property type="entry name" value="RNA-dir_pol_NSvirus"/>
</dbReference>
<dbReference type="InterPro" id="IPR001407">
    <property type="entry name" value="RNA_pol_PB1_influenza"/>
</dbReference>
<dbReference type="Pfam" id="PF00602">
    <property type="entry name" value="Flu_PB1"/>
    <property type="match status" value="1"/>
</dbReference>
<dbReference type="PIRSF" id="PIRSF000827">
    <property type="entry name" value="RdRPol_OMV"/>
    <property type="match status" value="1"/>
</dbReference>
<dbReference type="PROSITE" id="PS50525">
    <property type="entry name" value="RDRP_SSRNA_NEG_SEG"/>
    <property type="match status" value="1"/>
</dbReference>
<feature type="chain" id="PRO_0000373043" description="RNA-directed RNA polymerase catalytic subunit">
    <location>
        <begin position="1"/>
        <end position="757"/>
    </location>
</feature>
<feature type="domain" description="RdRp catalytic" evidence="2">
    <location>
        <begin position="286"/>
        <end position="483"/>
    </location>
</feature>
<feature type="region of interest" description="Disordered" evidence="3">
    <location>
        <begin position="53"/>
        <end position="82"/>
    </location>
</feature>
<feature type="region of interest" description="Promoter-binding site" evidence="2">
    <location>
        <begin position="249"/>
        <end position="256"/>
    </location>
</feature>
<feature type="short sequence motif" description="Nuclear localization signal" evidence="2">
    <location>
        <begin position="187"/>
        <end position="195"/>
    </location>
</feature>
<feature type="short sequence motif" description="Nuclear localization signal" evidence="2">
    <location>
        <begin position="203"/>
        <end position="216"/>
    </location>
</feature>